<organism>
    <name type="scientific">Shewanella oneidensis (strain ATCC 700550 / JCM 31522 / CIP 106686 / LMG 19005 / NCIMB 14063 / MR-1)</name>
    <dbReference type="NCBI Taxonomy" id="211586"/>
    <lineage>
        <taxon>Bacteria</taxon>
        <taxon>Pseudomonadati</taxon>
        <taxon>Pseudomonadota</taxon>
        <taxon>Gammaproteobacteria</taxon>
        <taxon>Alteromonadales</taxon>
        <taxon>Shewanellaceae</taxon>
        <taxon>Shewanella</taxon>
    </lineage>
</organism>
<protein>
    <recommendedName>
        <fullName evidence="1">DNA replication and repair protein RecF</fullName>
    </recommendedName>
</protein>
<keyword id="KW-0067">ATP-binding</keyword>
<keyword id="KW-0963">Cytoplasm</keyword>
<keyword id="KW-0227">DNA damage</keyword>
<keyword id="KW-0234">DNA repair</keyword>
<keyword id="KW-0235">DNA replication</keyword>
<keyword id="KW-0238">DNA-binding</keyword>
<keyword id="KW-0547">Nucleotide-binding</keyword>
<keyword id="KW-1185">Reference proteome</keyword>
<keyword id="KW-0742">SOS response</keyword>
<sequence length="360" mass="41010">MSLIRLNIDSFRNIQLAQLSPSEGINLIYGQNGSGKTSILEAIYFLGMGRSFRSHLSQRVINNDQDKLTLFATLNLPRGDSKIGLRRFRSGETEVKIDGEKVKRLSTLAETLPIQVITPESFSLLFEGPKSRRQFIDWGAFHTDPQFYAAWMNVRRVLKQRNQMLRNGSPYDQIQYWDREFIRYTEQVTEIRNRYVDSLNELLKGIIGEFLPQVDVKVSFTRGWDSKTDFAQLLESQYPRDLATGHTVSGPHKADLRLRVGTLPAQDALSRGQLKLLVCALRIAQGKLLKQQIDKHSIYLVDDLPSELDAQHRQLLLKQLVDTGAQVFVTAIEPAAIVDSLHTPPSRMFHVEHGRVTVIE</sequence>
<reference key="1">
    <citation type="journal article" date="2002" name="Nat. Biotechnol.">
        <title>Genome sequence of the dissimilatory metal ion-reducing bacterium Shewanella oneidensis.</title>
        <authorList>
            <person name="Heidelberg J.F."/>
            <person name="Paulsen I.T."/>
            <person name="Nelson K.E."/>
            <person name="Gaidos E.J."/>
            <person name="Nelson W.C."/>
            <person name="Read T.D."/>
            <person name="Eisen J.A."/>
            <person name="Seshadri R."/>
            <person name="Ward N.L."/>
            <person name="Methe B.A."/>
            <person name="Clayton R.A."/>
            <person name="Meyer T."/>
            <person name="Tsapin A."/>
            <person name="Scott J."/>
            <person name="Beanan M.J."/>
            <person name="Brinkac L.M."/>
            <person name="Daugherty S.C."/>
            <person name="DeBoy R.T."/>
            <person name="Dodson R.J."/>
            <person name="Durkin A.S."/>
            <person name="Haft D.H."/>
            <person name="Kolonay J.F."/>
            <person name="Madupu R."/>
            <person name="Peterson J.D."/>
            <person name="Umayam L.A."/>
            <person name="White O."/>
            <person name="Wolf A.M."/>
            <person name="Vamathevan J.J."/>
            <person name="Weidman J.F."/>
            <person name="Impraim M."/>
            <person name="Lee K."/>
            <person name="Berry K.J."/>
            <person name="Lee C."/>
            <person name="Mueller J."/>
            <person name="Khouri H.M."/>
            <person name="Gill J."/>
            <person name="Utterback T.R."/>
            <person name="McDonald L.A."/>
            <person name="Feldblyum T.V."/>
            <person name="Smith H.O."/>
            <person name="Venter J.C."/>
            <person name="Nealson K.H."/>
            <person name="Fraser C.M."/>
        </authorList>
    </citation>
    <scope>NUCLEOTIDE SEQUENCE [LARGE SCALE GENOMIC DNA]</scope>
    <source>
        <strain>ATCC 700550 / JCM 31522 / CIP 106686 / LMG 19005 / NCIMB 14063 / MR-1</strain>
    </source>
</reference>
<evidence type="ECO:0000255" key="1">
    <source>
        <dbReference type="HAMAP-Rule" id="MF_00365"/>
    </source>
</evidence>
<name>RECF_SHEON</name>
<accession>Q8EKT0</accession>
<proteinExistence type="inferred from homology"/>
<gene>
    <name evidence="1" type="primary">recF</name>
    <name type="ordered locus">SO_0010</name>
</gene>
<dbReference type="EMBL" id="AE014299">
    <property type="protein sequence ID" value="AAN53097.1"/>
    <property type="molecule type" value="Genomic_DNA"/>
</dbReference>
<dbReference type="RefSeq" id="NP_715652.1">
    <property type="nucleotide sequence ID" value="NC_004347.2"/>
</dbReference>
<dbReference type="RefSeq" id="WP_011070426.1">
    <property type="nucleotide sequence ID" value="NC_004347.2"/>
</dbReference>
<dbReference type="SMR" id="Q8EKT0"/>
<dbReference type="STRING" id="211586.SO_0010"/>
<dbReference type="PaxDb" id="211586-SO_0010"/>
<dbReference type="KEGG" id="son:SO_0010"/>
<dbReference type="PATRIC" id="fig|211586.12.peg.10"/>
<dbReference type="eggNOG" id="COG1195">
    <property type="taxonomic scope" value="Bacteria"/>
</dbReference>
<dbReference type="HOGENOM" id="CLU_040267_0_0_6"/>
<dbReference type="OrthoDB" id="9803889at2"/>
<dbReference type="PhylomeDB" id="Q8EKT0"/>
<dbReference type="BioCyc" id="SONE211586:G1GMP-10-MONOMER"/>
<dbReference type="Proteomes" id="UP000008186">
    <property type="component" value="Chromosome"/>
</dbReference>
<dbReference type="GO" id="GO:0005737">
    <property type="term" value="C:cytoplasm"/>
    <property type="evidence" value="ECO:0007669"/>
    <property type="project" value="UniProtKB-SubCell"/>
</dbReference>
<dbReference type="GO" id="GO:0005524">
    <property type="term" value="F:ATP binding"/>
    <property type="evidence" value="ECO:0007669"/>
    <property type="project" value="UniProtKB-UniRule"/>
</dbReference>
<dbReference type="GO" id="GO:0003697">
    <property type="term" value="F:single-stranded DNA binding"/>
    <property type="evidence" value="ECO:0007669"/>
    <property type="project" value="UniProtKB-UniRule"/>
</dbReference>
<dbReference type="GO" id="GO:0006260">
    <property type="term" value="P:DNA replication"/>
    <property type="evidence" value="ECO:0007669"/>
    <property type="project" value="UniProtKB-UniRule"/>
</dbReference>
<dbReference type="GO" id="GO:0000731">
    <property type="term" value="P:DNA synthesis involved in DNA repair"/>
    <property type="evidence" value="ECO:0000318"/>
    <property type="project" value="GO_Central"/>
</dbReference>
<dbReference type="GO" id="GO:0006302">
    <property type="term" value="P:double-strand break repair"/>
    <property type="evidence" value="ECO:0000318"/>
    <property type="project" value="GO_Central"/>
</dbReference>
<dbReference type="GO" id="GO:0009432">
    <property type="term" value="P:SOS response"/>
    <property type="evidence" value="ECO:0007669"/>
    <property type="project" value="UniProtKB-UniRule"/>
</dbReference>
<dbReference type="Gene3D" id="3.40.50.300">
    <property type="entry name" value="P-loop containing nucleotide triphosphate hydrolases"/>
    <property type="match status" value="1"/>
</dbReference>
<dbReference type="Gene3D" id="1.20.1050.90">
    <property type="entry name" value="RecF/RecN/SMC, N-terminal domain"/>
    <property type="match status" value="1"/>
</dbReference>
<dbReference type="HAMAP" id="MF_00365">
    <property type="entry name" value="RecF"/>
    <property type="match status" value="1"/>
</dbReference>
<dbReference type="InterPro" id="IPR001238">
    <property type="entry name" value="DNA-binding_RecF"/>
</dbReference>
<dbReference type="InterPro" id="IPR018078">
    <property type="entry name" value="DNA-binding_RecF_CS"/>
</dbReference>
<dbReference type="InterPro" id="IPR027417">
    <property type="entry name" value="P-loop_NTPase"/>
</dbReference>
<dbReference type="InterPro" id="IPR003395">
    <property type="entry name" value="RecF/RecN/SMC_N"/>
</dbReference>
<dbReference type="InterPro" id="IPR042174">
    <property type="entry name" value="RecF_2"/>
</dbReference>
<dbReference type="NCBIfam" id="TIGR00611">
    <property type="entry name" value="recf"/>
    <property type="match status" value="1"/>
</dbReference>
<dbReference type="PANTHER" id="PTHR32182">
    <property type="entry name" value="DNA REPLICATION AND REPAIR PROTEIN RECF"/>
    <property type="match status" value="1"/>
</dbReference>
<dbReference type="PANTHER" id="PTHR32182:SF0">
    <property type="entry name" value="DNA REPLICATION AND REPAIR PROTEIN RECF"/>
    <property type="match status" value="1"/>
</dbReference>
<dbReference type="Pfam" id="PF02463">
    <property type="entry name" value="SMC_N"/>
    <property type="match status" value="1"/>
</dbReference>
<dbReference type="SUPFAM" id="SSF52540">
    <property type="entry name" value="P-loop containing nucleoside triphosphate hydrolases"/>
    <property type="match status" value="1"/>
</dbReference>
<dbReference type="PROSITE" id="PS00617">
    <property type="entry name" value="RECF_1"/>
    <property type="match status" value="1"/>
</dbReference>
<dbReference type="PROSITE" id="PS00618">
    <property type="entry name" value="RECF_2"/>
    <property type="match status" value="1"/>
</dbReference>
<comment type="function">
    <text evidence="1">The RecF protein is involved in DNA metabolism; it is required for DNA replication and normal SOS inducibility. RecF binds preferentially to single-stranded, linear DNA. It also seems to bind ATP.</text>
</comment>
<comment type="subcellular location">
    <subcellularLocation>
        <location evidence="1">Cytoplasm</location>
    </subcellularLocation>
</comment>
<comment type="similarity">
    <text evidence="1">Belongs to the RecF family.</text>
</comment>
<feature type="chain" id="PRO_0000196453" description="DNA replication and repair protein RecF">
    <location>
        <begin position="1"/>
        <end position="360"/>
    </location>
</feature>
<feature type="binding site" evidence="1">
    <location>
        <begin position="30"/>
        <end position="37"/>
    </location>
    <ligand>
        <name>ATP</name>
        <dbReference type="ChEBI" id="CHEBI:30616"/>
    </ligand>
</feature>